<comment type="function">
    <text evidence="1">One of the primary rRNA binding proteins, it binds directly to 16S rRNA where it helps nucleate assembly of the platform of the 30S subunit by binding and bridging several RNA helices of the 16S rRNA.</text>
</comment>
<comment type="function">
    <text evidence="1">Forms an intersubunit bridge (bridge B4) with the 23S rRNA of the 50S subunit in the ribosome.</text>
</comment>
<comment type="subunit">
    <text evidence="1">Part of the 30S ribosomal subunit. Forms a bridge to the 50S subunit in the 70S ribosome, contacting the 23S rRNA.</text>
</comment>
<comment type="similarity">
    <text evidence="1">Belongs to the universal ribosomal protein uS15 family.</text>
</comment>
<keyword id="KW-0687">Ribonucleoprotein</keyword>
<keyword id="KW-0689">Ribosomal protein</keyword>
<keyword id="KW-0694">RNA-binding</keyword>
<keyword id="KW-0699">rRNA-binding</keyword>
<protein>
    <recommendedName>
        <fullName evidence="1">Small ribosomal subunit protein uS15</fullName>
    </recommendedName>
    <alternativeName>
        <fullName evidence="2">30S ribosomal protein S15</fullName>
    </alternativeName>
</protein>
<proteinExistence type="inferred from homology"/>
<gene>
    <name evidence="1" type="primary">rpsO</name>
    <name type="ordered locus">EFER_3144</name>
</gene>
<accession>B7LR34</accession>
<sequence length="89" mass="10269">MSLSTEATAKIVSEFGRDANDTGSTEVQVALLTAQINHLQGHFAEHKKDHHSRRGLLRMVSQRRKLLDYLKRKDVARYTQLIERLGLRR</sequence>
<reference key="1">
    <citation type="journal article" date="2009" name="PLoS Genet.">
        <title>Organised genome dynamics in the Escherichia coli species results in highly diverse adaptive paths.</title>
        <authorList>
            <person name="Touchon M."/>
            <person name="Hoede C."/>
            <person name="Tenaillon O."/>
            <person name="Barbe V."/>
            <person name="Baeriswyl S."/>
            <person name="Bidet P."/>
            <person name="Bingen E."/>
            <person name="Bonacorsi S."/>
            <person name="Bouchier C."/>
            <person name="Bouvet O."/>
            <person name="Calteau A."/>
            <person name="Chiapello H."/>
            <person name="Clermont O."/>
            <person name="Cruveiller S."/>
            <person name="Danchin A."/>
            <person name="Diard M."/>
            <person name="Dossat C."/>
            <person name="Karoui M.E."/>
            <person name="Frapy E."/>
            <person name="Garry L."/>
            <person name="Ghigo J.M."/>
            <person name="Gilles A.M."/>
            <person name="Johnson J."/>
            <person name="Le Bouguenec C."/>
            <person name="Lescat M."/>
            <person name="Mangenot S."/>
            <person name="Martinez-Jehanne V."/>
            <person name="Matic I."/>
            <person name="Nassif X."/>
            <person name="Oztas S."/>
            <person name="Petit M.A."/>
            <person name="Pichon C."/>
            <person name="Rouy Z."/>
            <person name="Ruf C.S."/>
            <person name="Schneider D."/>
            <person name="Tourret J."/>
            <person name="Vacherie B."/>
            <person name="Vallenet D."/>
            <person name="Medigue C."/>
            <person name="Rocha E.P.C."/>
            <person name="Denamur E."/>
        </authorList>
    </citation>
    <scope>NUCLEOTIDE SEQUENCE [LARGE SCALE GENOMIC DNA]</scope>
    <source>
        <strain>ATCC 35469 / DSM 13698 / BCRC 15582 / CCUG 18766 / IAM 14443 / JCM 21226 / LMG 7866 / NBRC 102419 / NCTC 12128 / CDC 0568-73</strain>
    </source>
</reference>
<name>RS15_ESCF3</name>
<organism>
    <name type="scientific">Escherichia fergusonii (strain ATCC 35469 / DSM 13698 / CCUG 18766 / IAM 14443 / JCM 21226 / LMG 7866 / NBRC 102419 / NCTC 12128 / CDC 0568-73)</name>
    <dbReference type="NCBI Taxonomy" id="585054"/>
    <lineage>
        <taxon>Bacteria</taxon>
        <taxon>Pseudomonadati</taxon>
        <taxon>Pseudomonadota</taxon>
        <taxon>Gammaproteobacteria</taxon>
        <taxon>Enterobacterales</taxon>
        <taxon>Enterobacteriaceae</taxon>
        <taxon>Escherichia</taxon>
    </lineage>
</organism>
<feature type="chain" id="PRO_1000143117" description="Small ribosomal subunit protein uS15">
    <location>
        <begin position="1"/>
        <end position="89"/>
    </location>
</feature>
<dbReference type="EMBL" id="CU928158">
    <property type="protein sequence ID" value="CAQ90637.1"/>
    <property type="molecule type" value="Genomic_DNA"/>
</dbReference>
<dbReference type="RefSeq" id="WP_000059466.1">
    <property type="nucleotide sequence ID" value="NC_011740.1"/>
</dbReference>
<dbReference type="SMR" id="B7LR34"/>
<dbReference type="GeneID" id="93778818"/>
<dbReference type="KEGG" id="efe:EFER_3144"/>
<dbReference type="HOGENOM" id="CLU_148518_0_0_6"/>
<dbReference type="OrthoDB" id="9799262at2"/>
<dbReference type="Proteomes" id="UP000000745">
    <property type="component" value="Chromosome"/>
</dbReference>
<dbReference type="GO" id="GO:0022627">
    <property type="term" value="C:cytosolic small ribosomal subunit"/>
    <property type="evidence" value="ECO:0007669"/>
    <property type="project" value="TreeGrafter"/>
</dbReference>
<dbReference type="GO" id="GO:0019843">
    <property type="term" value="F:rRNA binding"/>
    <property type="evidence" value="ECO:0007669"/>
    <property type="project" value="UniProtKB-UniRule"/>
</dbReference>
<dbReference type="GO" id="GO:0003735">
    <property type="term" value="F:structural constituent of ribosome"/>
    <property type="evidence" value="ECO:0007669"/>
    <property type="project" value="InterPro"/>
</dbReference>
<dbReference type="GO" id="GO:0006412">
    <property type="term" value="P:translation"/>
    <property type="evidence" value="ECO:0007669"/>
    <property type="project" value="UniProtKB-UniRule"/>
</dbReference>
<dbReference type="CDD" id="cd00353">
    <property type="entry name" value="Ribosomal_S15p_S13e"/>
    <property type="match status" value="1"/>
</dbReference>
<dbReference type="FunFam" id="1.10.287.10:FF:000002">
    <property type="entry name" value="30S ribosomal protein S15"/>
    <property type="match status" value="1"/>
</dbReference>
<dbReference type="Gene3D" id="6.10.250.3130">
    <property type="match status" value="1"/>
</dbReference>
<dbReference type="Gene3D" id="1.10.287.10">
    <property type="entry name" value="S15/NS1, RNA-binding"/>
    <property type="match status" value="1"/>
</dbReference>
<dbReference type="HAMAP" id="MF_01343_B">
    <property type="entry name" value="Ribosomal_uS15_B"/>
    <property type="match status" value="1"/>
</dbReference>
<dbReference type="InterPro" id="IPR000589">
    <property type="entry name" value="Ribosomal_uS15"/>
</dbReference>
<dbReference type="InterPro" id="IPR005290">
    <property type="entry name" value="Ribosomal_uS15_bac-type"/>
</dbReference>
<dbReference type="InterPro" id="IPR009068">
    <property type="entry name" value="uS15_NS1_RNA-bd_sf"/>
</dbReference>
<dbReference type="NCBIfam" id="TIGR00952">
    <property type="entry name" value="S15_bact"/>
    <property type="match status" value="1"/>
</dbReference>
<dbReference type="PANTHER" id="PTHR23321">
    <property type="entry name" value="RIBOSOMAL PROTEIN S15, BACTERIAL AND ORGANELLAR"/>
    <property type="match status" value="1"/>
</dbReference>
<dbReference type="PANTHER" id="PTHR23321:SF26">
    <property type="entry name" value="SMALL RIBOSOMAL SUBUNIT PROTEIN US15M"/>
    <property type="match status" value="1"/>
</dbReference>
<dbReference type="Pfam" id="PF00312">
    <property type="entry name" value="Ribosomal_S15"/>
    <property type="match status" value="1"/>
</dbReference>
<dbReference type="SMART" id="SM01387">
    <property type="entry name" value="Ribosomal_S15"/>
    <property type="match status" value="1"/>
</dbReference>
<dbReference type="SUPFAM" id="SSF47060">
    <property type="entry name" value="S15/NS1 RNA-binding domain"/>
    <property type="match status" value="1"/>
</dbReference>
<dbReference type="PROSITE" id="PS00362">
    <property type="entry name" value="RIBOSOMAL_S15"/>
    <property type="match status" value="1"/>
</dbReference>
<evidence type="ECO:0000255" key="1">
    <source>
        <dbReference type="HAMAP-Rule" id="MF_01343"/>
    </source>
</evidence>
<evidence type="ECO:0000305" key="2"/>